<accession>B9JRD7</accession>
<reference key="1">
    <citation type="journal article" date="2009" name="J. Bacteriol.">
        <title>Genome sequences of three Agrobacterium biovars help elucidate the evolution of multichromosome genomes in bacteria.</title>
        <authorList>
            <person name="Slater S.C."/>
            <person name="Goldman B.S."/>
            <person name="Goodner B."/>
            <person name="Setubal J.C."/>
            <person name="Farrand S.K."/>
            <person name="Nester E.W."/>
            <person name="Burr T.J."/>
            <person name="Banta L."/>
            <person name="Dickerman A.W."/>
            <person name="Paulsen I."/>
            <person name="Otten L."/>
            <person name="Suen G."/>
            <person name="Welch R."/>
            <person name="Almeida N.F."/>
            <person name="Arnold F."/>
            <person name="Burton O.T."/>
            <person name="Du Z."/>
            <person name="Ewing A."/>
            <person name="Godsy E."/>
            <person name="Heisel S."/>
            <person name="Houmiel K.L."/>
            <person name="Jhaveri J."/>
            <person name="Lu J."/>
            <person name="Miller N.M."/>
            <person name="Norton S."/>
            <person name="Chen Q."/>
            <person name="Phoolcharoen W."/>
            <person name="Ohlin V."/>
            <person name="Ondrusek D."/>
            <person name="Pride N."/>
            <person name="Stricklin S.L."/>
            <person name="Sun J."/>
            <person name="Wheeler C."/>
            <person name="Wilson L."/>
            <person name="Zhu H."/>
            <person name="Wood D.W."/>
        </authorList>
    </citation>
    <scope>NUCLEOTIDE SEQUENCE [LARGE SCALE GENOMIC DNA]</scope>
    <source>
        <strain>ATCC BAA-846 / DSM 112012 / S4</strain>
    </source>
</reference>
<evidence type="ECO:0000255" key="1">
    <source>
        <dbReference type="HAMAP-Rule" id="MF_00011"/>
    </source>
</evidence>
<gene>
    <name evidence="1" type="primary">purA</name>
    <name type="ordered locus">Avi_3544</name>
</gene>
<protein>
    <recommendedName>
        <fullName evidence="1">Adenylosuccinate synthetase</fullName>
        <shortName evidence="1">AMPSase</shortName>
        <shortName evidence="1">AdSS</shortName>
        <ecNumber evidence="1">6.3.4.4</ecNumber>
    </recommendedName>
    <alternativeName>
        <fullName evidence="1">IMP--aspartate ligase</fullName>
    </alternativeName>
</protein>
<keyword id="KW-0963">Cytoplasm</keyword>
<keyword id="KW-0342">GTP-binding</keyword>
<keyword id="KW-0436">Ligase</keyword>
<keyword id="KW-0460">Magnesium</keyword>
<keyword id="KW-0479">Metal-binding</keyword>
<keyword id="KW-0547">Nucleotide-binding</keyword>
<keyword id="KW-0658">Purine biosynthesis</keyword>
<keyword id="KW-1185">Reference proteome</keyword>
<feature type="chain" id="PRO_1000116448" description="Adenylosuccinate synthetase">
    <location>
        <begin position="1"/>
        <end position="432"/>
    </location>
</feature>
<feature type="active site" description="Proton acceptor" evidence="1">
    <location>
        <position position="13"/>
    </location>
</feature>
<feature type="active site" description="Proton donor" evidence="1">
    <location>
        <position position="41"/>
    </location>
</feature>
<feature type="binding site" evidence="1">
    <location>
        <begin position="12"/>
        <end position="18"/>
    </location>
    <ligand>
        <name>GTP</name>
        <dbReference type="ChEBI" id="CHEBI:37565"/>
    </ligand>
</feature>
<feature type="binding site" description="in other chain" evidence="1">
    <location>
        <begin position="13"/>
        <end position="16"/>
    </location>
    <ligand>
        <name>IMP</name>
        <dbReference type="ChEBI" id="CHEBI:58053"/>
        <note>ligand shared between dimeric partners</note>
    </ligand>
</feature>
<feature type="binding site" evidence="1">
    <location>
        <position position="13"/>
    </location>
    <ligand>
        <name>Mg(2+)</name>
        <dbReference type="ChEBI" id="CHEBI:18420"/>
    </ligand>
</feature>
<feature type="binding site" description="in other chain" evidence="1">
    <location>
        <begin position="38"/>
        <end position="41"/>
    </location>
    <ligand>
        <name>IMP</name>
        <dbReference type="ChEBI" id="CHEBI:58053"/>
        <note>ligand shared between dimeric partners</note>
    </ligand>
</feature>
<feature type="binding site" evidence="1">
    <location>
        <begin position="40"/>
        <end position="42"/>
    </location>
    <ligand>
        <name>GTP</name>
        <dbReference type="ChEBI" id="CHEBI:37565"/>
    </ligand>
</feature>
<feature type="binding site" evidence="1">
    <location>
        <position position="40"/>
    </location>
    <ligand>
        <name>Mg(2+)</name>
        <dbReference type="ChEBI" id="CHEBI:18420"/>
    </ligand>
</feature>
<feature type="binding site" description="in other chain" evidence="1">
    <location>
        <position position="132"/>
    </location>
    <ligand>
        <name>IMP</name>
        <dbReference type="ChEBI" id="CHEBI:58053"/>
        <note>ligand shared between dimeric partners</note>
    </ligand>
</feature>
<feature type="binding site" evidence="1">
    <location>
        <position position="146"/>
    </location>
    <ligand>
        <name>IMP</name>
        <dbReference type="ChEBI" id="CHEBI:58053"/>
        <note>ligand shared between dimeric partners</note>
    </ligand>
</feature>
<feature type="binding site" description="in other chain" evidence="1">
    <location>
        <position position="226"/>
    </location>
    <ligand>
        <name>IMP</name>
        <dbReference type="ChEBI" id="CHEBI:58053"/>
        <note>ligand shared between dimeric partners</note>
    </ligand>
</feature>
<feature type="binding site" description="in other chain" evidence="1">
    <location>
        <position position="241"/>
    </location>
    <ligand>
        <name>IMP</name>
        <dbReference type="ChEBI" id="CHEBI:58053"/>
        <note>ligand shared between dimeric partners</note>
    </ligand>
</feature>
<feature type="binding site" evidence="1">
    <location>
        <begin position="301"/>
        <end position="307"/>
    </location>
    <ligand>
        <name>substrate</name>
    </ligand>
</feature>
<feature type="binding site" description="in other chain" evidence="1">
    <location>
        <position position="305"/>
    </location>
    <ligand>
        <name>IMP</name>
        <dbReference type="ChEBI" id="CHEBI:58053"/>
        <note>ligand shared between dimeric partners</note>
    </ligand>
</feature>
<feature type="binding site" evidence="1">
    <location>
        <position position="307"/>
    </location>
    <ligand>
        <name>GTP</name>
        <dbReference type="ChEBI" id="CHEBI:37565"/>
    </ligand>
</feature>
<feature type="binding site" evidence="1">
    <location>
        <begin position="333"/>
        <end position="335"/>
    </location>
    <ligand>
        <name>GTP</name>
        <dbReference type="ChEBI" id="CHEBI:37565"/>
    </ligand>
</feature>
<feature type="binding site" evidence="1">
    <location>
        <begin position="415"/>
        <end position="417"/>
    </location>
    <ligand>
        <name>GTP</name>
        <dbReference type="ChEBI" id="CHEBI:37565"/>
    </ligand>
</feature>
<sequence length="432" mass="46392">MTNVVVVGSQWGDEGKGKIVDWLSERADVVVRFQGGHNAGHTLVIDGISYKLSLLPSGVVRPGKMAVIGNGVVVDPHALIAEIAKLAAQGVTVTPDNLRIADNATLILSLHRELDGMREDAATNSGTKIGTTRRGIGPAYEDKVGRRAIRVMDLADPEGLAEKVARILPHHNALRRGFGAPEVEHSTIMEELLSVADKVLPFRETVWLMLDKERRRGARILFEGAQGSLLDIDHGTYPFVTSSNTVAGQAAAGSGMGPGSLGYILGITKAYTTRVGEGPFPTELTDEVGQFLGEKGHEFGTVTGRKRRCGWFDAALVRQSVATNGITGIALTKLDVLDGLDELKICVGYKLDGVEIDHLPAAQAAQARVEPIYVTLEGWKESTVGARKWADLPAQAIKYVRQVEELIGAPVALLSTSPERDDTILVTDPFED</sequence>
<dbReference type="EC" id="6.3.4.4" evidence="1"/>
<dbReference type="EMBL" id="CP000633">
    <property type="protein sequence ID" value="ACM37548.1"/>
    <property type="molecule type" value="Genomic_DNA"/>
</dbReference>
<dbReference type="RefSeq" id="WP_015916961.1">
    <property type="nucleotide sequence ID" value="NC_011989.1"/>
</dbReference>
<dbReference type="SMR" id="B9JRD7"/>
<dbReference type="STRING" id="311402.Avi_3544"/>
<dbReference type="KEGG" id="avi:Avi_3544"/>
<dbReference type="eggNOG" id="COG0104">
    <property type="taxonomic scope" value="Bacteria"/>
</dbReference>
<dbReference type="HOGENOM" id="CLU_029848_0_0_5"/>
<dbReference type="UniPathway" id="UPA00075">
    <property type="reaction ID" value="UER00335"/>
</dbReference>
<dbReference type="Proteomes" id="UP000001596">
    <property type="component" value="Chromosome 1"/>
</dbReference>
<dbReference type="GO" id="GO:0005737">
    <property type="term" value="C:cytoplasm"/>
    <property type="evidence" value="ECO:0007669"/>
    <property type="project" value="UniProtKB-SubCell"/>
</dbReference>
<dbReference type="GO" id="GO:0004019">
    <property type="term" value="F:adenylosuccinate synthase activity"/>
    <property type="evidence" value="ECO:0007669"/>
    <property type="project" value="UniProtKB-UniRule"/>
</dbReference>
<dbReference type="GO" id="GO:0005525">
    <property type="term" value="F:GTP binding"/>
    <property type="evidence" value="ECO:0007669"/>
    <property type="project" value="UniProtKB-UniRule"/>
</dbReference>
<dbReference type="GO" id="GO:0000287">
    <property type="term" value="F:magnesium ion binding"/>
    <property type="evidence" value="ECO:0007669"/>
    <property type="project" value="UniProtKB-UniRule"/>
</dbReference>
<dbReference type="GO" id="GO:0044208">
    <property type="term" value="P:'de novo' AMP biosynthetic process"/>
    <property type="evidence" value="ECO:0007669"/>
    <property type="project" value="UniProtKB-UniRule"/>
</dbReference>
<dbReference type="GO" id="GO:0046040">
    <property type="term" value="P:IMP metabolic process"/>
    <property type="evidence" value="ECO:0007669"/>
    <property type="project" value="TreeGrafter"/>
</dbReference>
<dbReference type="CDD" id="cd03108">
    <property type="entry name" value="AdSS"/>
    <property type="match status" value="1"/>
</dbReference>
<dbReference type="FunFam" id="1.10.300.10:FF:000001">
    <property type="entry name" value="Adenylosuccinate synthetase"/>
    <property type="match status" value="1"/>
</dbReference>
<dbReference type="FunFam" id="3.90.170.10:FF:000001">
    <property type="entry name" value="Adenylosuccinate synthetase"/>
    <property type="match status" value="1"/>
</dbReference>
<dbReference type="Gene3D" id="3.40.440.10">
    <property type="entry name" value="Adenylosuccinate Synthetase, subunit A, domain 1"/>
    <property type="match status" value="1"/>
</dbReference>
<dbReference type="Gene3D" id="1.10.300.10">
    <property type="entry name" value="Adenylosuccinate Synthetase, subunit A, domain 2"/>
    <property type="match status" value="1"/>
</dbReference>
<dbReference type="Gene3D" id="3.90.170.10">
    <property type="entry name" value="Adenylosuccinate Synthetase, subunit A, domain 3"/>
    <property type="match status" value="1"/>
</dbReference>
<dbReference type="HAMAP" id="MF_00011">
    <property type="entry name" value="Adenylosucc_synth"/>
    <property type="match status" value="1"/>
</dbReference>
<dbReference type="InterPro" id="IPR018220">
    <property type="entry name" value="Adenylosuccin_syn_GTP-bd"/>
</dbReference>
<dbReference type="InterPro" id="IPR033128">
    <property type="entry name" value="Adenylosuccin_syn_Lys_AS"/>
</dbReference>
<dbReference type="InterPro" id="IPR042109">
    <property type="entry name" value="Adenylosuccinate_synth_dom1"/>
</dbReference>
<dbReference type="InterPro" id="IPR042110">
    <property type="entry name" value="Adenylosuccinate_synth_dom2"/>
</dbReference>
<dbReference type="InterPro" id="IPR042111">
    <property type="entry name" value="Adenylosuccinate_synth_dom3"/>
</dbReference>
<dbReference type="InterPro" id="IPR001114">
    <property type="entry name" value="Adenylosuccinate_synthetase"/>
</dbReference>
<dbReference type="InterPro" id="IPR027417">
    <property type="entry name" value="P-loop_NTPase"/>
</dbReference>
<dbReference type="NCBIfam" id="NF002223">
    <property type="entry name" value="PRK01117.1"/>
    <property type="match status" value="1"/>
</dbReference>
<dbReference type="NCBIfam" id="TIGR00184">
    <property type="entry name" value="purA"/>
    <property type="match status" value="1"/>
</dbReference>
<dbReference type="PANTHER" id="PTHR11846">
    <property type="entry name" value="ADENYLOSUCCINATE SYNTHETASE"/>
    <property type="match status" value="1"/>
</dbReference>
<dbReference type="PANTHER" id="PTHR11846:SF0">
    <property type="entry name" value="ADENYLOSUCCINATE SYNTHETASE"/>
    <property type="match status" value="1"/>
</dbReference>
<dbReference type="Pfam" id="PF00709">
    <property type="entry name" value="Adenylsucc_synt"/>
    <property type="match status" value="1"/>
</dbReference>
<dbReference type="SMART" id="SM00788">
    <property type="entry name" value="Adenylsucc_synt"/>
    <property type="match status" value="1"/>
</dbReference>
<dbReference type="SUPFAM" id="SSF52540">
    <property type="entry name" value="P-loop containing nucleoside triphosphate hydrolases"/>
    <property type="match status" value="1"/>
</dbReference>
<dbReference type="PROSITE" id="PS01266">
    <property type="entry name" value="ADENYLOSUCCIN_SYN_1"/>
    <property type="match status" value="1"/>
</dbReference>
<dbReference type="PROSITE" id="PS00513">
    <property type="entry name" value="ADENYLOSUCCIN_SYN_2"/>
    <property type="match status" value="1"/>
</dbReference>
<proteinExistence type="inferred from homology"/>
<organism>
    <name type="scientific">Allorhizobium ampelinum (strain ATCC BAA-846 / DSM 112012 / S4)</name>
    <name type="common">Agrobacterium vitis (strain S4)</name>
    <dbReference type="NCBI Taxonomy" id="311402"/>
    <lineage>
        <taxon>Bacteria</taxon>
        <taxon>Pseudomonadati</taxon>
        <taxon>Pseudomonadota</taxon>
        <taxon>Alphaproteobacteria</taxon>
        <taxon>Hyphomicrobiales</taxon>
        <taxon>Rhizobiaceae</taxon>
        <taxon>Rhizobium/Agrobacterium group</taxon>
        <taxon>Allorhizobium</taxon>
        <taxon>Allorhizobium ampelinum</taxon>
    </lineage>
</organism>
<name>PURA_ALLAM</name>
<comment type="function">
    <text evidence="1">Plays an important role in the de novo pathway of purine nucleotide biosynthesis. Catalyzes the first committed step in the biosynthesis of AMP from IMP.</text>
</comment>
<comment type="catalytic activity">
    <reaction evidence="1">
        <text>IMP + L-aspartate + GTP = N(6)-(1,2-dicarboxyethyl)-AMP + GDP + phosphate + 2 H(+)</text>
        <dbReference type="Rhea" id="RHEA:15753"/>
        <dbReference type="ChEBI" id="CHEBI:15378"/>
        <dbReference type="ChEBI" id="CHEBI:29991"/>
        <dbReference type="ChEBI" id="CHEBI:37565"/>
        <dbReference type="ChEBI" id="CHEBI:43474"/>
        <dbReference type="ChEBI" id="CHEBI:57567"/>
        <dbReference type="ChEBI" id="CHEBI:58053"/>
        <dbReference type="ChEBI" id="CHEBI:58189"/>
        <dbReference type="EC" id="6.3.4.4"/>
    </reaction>
</comment>
<comment type="cofactor">
    <cofactor evidence="1">
        <name>Mg(2+)</name>
        <dbReference type="ChEBI" id="CHEBI:18420"/>
    </cofactor>
    <text evidence="1">Binds 1 Mg(2+) ion per subunit.</text>
</comment>
<comment type="pathway">
    <text evidence="1">Purine metabolism; AMP biosynthesis via de novo pathway; AMP from IMP: step 1/2.</text>
</comment>
<comment type="subunit">
    <text evidence="1">Homodimer.</text>
</comment>
<comment type="subcellular location">
    <subcellularLocation>
        <location evidence="1">Cytoplasm</location>
    </subcellularLocation>
</comment>
<comment type="similarity">
    <text evidence="1">Belongs to the adenylosuccinate synthetase family.</text>
</comment>